<proteinExistence type="inferred from homology"/>
<accession>Q7J198</accession>
<gene>
    <name evidence="1" type="primary">psbN</name>
</gene>
<comment type="function">
    <text evidence="1">May play a role in photosystem I and II biogenesis.</text>
</comment>
<comment type="subcellular location">
    <subcellularLocation>
        <location evidence="1">Plastid</location>
        <location evidence="1">Chloroplast thylakoid membrane</location>
        <topology evidence="1">Single-pass membrane protein</topology>
    </subcellularLocation>
</comment>
<comment type="similarity">
    <text evidence="1">Belongs to the PsbN family.</text>
</comment>
<comment type="caution">
    <text evidence="1">Originally thought to be a component of PSII; based on experiments in Synechocystis, N.tabacum and barley, and its absence from PSII in T.elongatus and T.vulcanus, this is probably not true.</text>
</comment>
<organism>
    <name type="scientific">Cabomba caroliniana</name>
    <name type="common">Carolina fanwort</name>
    <dbReference type="NCBI Taxonomy" id="4426"/>
    <lineage>
        <taxon>Eukaryota</taxon>
        <taxon>Viridiplantae</taxon>
        <taxon>Streptophyta</taxon>
        <taxon>Embryophyta</taxon>
        <taxon>Tracheophyta</taxon>
        <taxon>Spermatophyta</taxon>
        <taxon>Magnoliopsida</taxon>
        <taxon>Nymphaeales</taxon>
        <taxon>Cabombaceae</taxon>
        <taxon>Cabomba</taxon>
    </lineage>
</organism>
<dbReference type="EMBL" id="AF123845">
    <property type="protein sequence ID" value="AAG26259.1"/>
    <property type="molecule type" value="Genomic_DNA"/>
</dbReference>
<dbReference type="RefSeq" id="YP_009310546.1">
    <property type="nucleotide sequence ID" value="NC_031505.1"/>
</dbReference>
<dbReference type="SMR" id="Q7J198"/>
<dbReference type="GeneID" id="29991310"/>
<dbReference type="GO" id="GO:0009535">
    <property type="term" value="C:chloroplast thylakoid membrane"/>
    <property type="evidence" value="ECO:0007669"/>
    <property type="project" value="UniProtKB-SubCell"/>
</dbReference>
<dbReference type="GO" id="GO:0015979">
    <property type="term" value="P:photosynthesis"/>
    <property type="evidence" value="ECO:0007669"/>
    <property type="project" value="InterPro"/>
</dbReference>
<dbReference type="HAMAP" id="MF_00293">
    <property type="entry name" value="PSII_PsbN"/>
    <property type="match status" value="1"/>
</dbReference>
<dbReference type="InterPro" id="IPR003398">
    <property type="entry name" value="PSII_PsbN"/>
</dbReference>
<dbReference type="PANTHER" id="PTHR35326">
    <property type="entry name" value="PROTEIN PSBN"/>
    <property type="match status" value="1"/>
</dbReference>
<dbReference type="PANTHER" id="PTHR35326:SF3">
    <property type="entry name" value="PROTEIN PSBN"/>
    <property type="match status" value="1"/>
</dbReference>
<dbReference type="Pfam" id="PF02468">
    <property type="entry name" value="PsbN"/>
    <property type="match status" value="1"/>
</dbReference>
<evidence type="ECO:0000255" key="1">
    <source>
        <dbReference type="HAMAP-Rule" id="MF_00293"/>
    </source>
</evidence>
<reference key="1">
    <citation type="journal article" date="2000" name="Am. J. Bot.">
        <title>Utility of 17 chloroplast genes for inferring the phylogeny of the basal angiosperms.</title>
        <authorList>
            <person name="Graham S.W."/>
            <person name="Olmstead R.G."/>
        </authorList>
    </citation>
    <scope>NUCLEOTIDE SEQUENCE [GENOMIC DNA]</scope>
</reference>
<feature type="chain" id="PRO_0000207876" description="Protein PsbN">
    <location>
        <begin position="1"/>
        <end position="43"/>
    </location>
</feature>
<feature type="transmembrane region" description="Helical" evidence="1">
    <location>
        <begin position="5"/>
        <end position="27"/>
    </location>
</feature>
<name>PSBN_CABCA</name>
<geneLocation type="chloroplast"/>
<keyword id="KW-0150">Chloroplast</keyword>
<keyword id="KW-0472">Membrane</keyword>
<keyword id="KW-0934">Plastid</keyword>
<keyword id="KW-0793">Thylakoid</keyword>
<keyword id="KW-0812">Transmembrane</keyword>
<keyword id="KW-1133">Transmembrane helix</keyword>
<protein>
    <recommendedName>
        <fullName evidence="1">Protein PsbN</fullName>
    </recommendedName>
</protein>
<sequence length="43" mass="4662">METATLVAISISGLLVSFTGYALYTAFGQPSQQLRDPFEEHGD</sequence>